<accession>Q4UJX4</accession>
<comment type="sequence caution" evidence="2">
    <conflict type="erroneous initiation">
        <sequence resource="EMBL-CDS" id="AAY62165"/>
    </conflict>
</comment>
<feature type="signal peptide" evidence="1">
    <location>
        <begin position="1"/>
        <end position="22"/>
    </location>
</feature>
<feature type="chain" id="PRO_0000317024" description="Putative adhesin RF_1314">
    <location>
        <begin position="23"/>
        <end position="224"/>
    </location>
</feature>
<keyword id="KW-0732">Signal</keyword>
<dbReference type="EMBL" id="CP000053">
    <property type="protein sequence ID" value="AAY62165.1"/>
    <property type="status" value="ALT_INIT"/>
    <property type="molecule type" value="Genomic_DNA"/>
</dbReference>
<dbReference type="STRING" id="315456.RF_1314"/>
<dbReference type="KEGG" id="rfe:RF_1314"/>
<dbReference type="eggNOG" id="COG3637">
    <property type="taxonomic scope" value="Bacteria"/>
</dbReference>
<dbReference type="HOGENOM" id="CLU_1146500_0_0_5"/>
<dbReference type="OrthoDB" id="5643626at2"/>
<dbReference type="Proteomes" id="UP000008548">
    <property type="component" value="Chromosome"/>
</dbReference>
<dbReference type="GO" id="GO:0009279">
    <property type="term" value="C:cell outer membrane"/>
    <property type="evidence" value="ECO:0007669"/>
    <property type="project" value="InterPro"/>
</dbReference>
<dbReference type="Gene3D" id="2.40.160.20">
    <property type="match status" value="1"/>
</dbReference>
<dbReference type="InterPro" id="IPR011250">
    <property type="entry name" value="OMP/PagP_b-brl"/>
</dbReference>
<dbReference type="InterPro" id="IPR000498">
    <property type="entry name" value="OmpA-like_TM_dom"/>
</dbReference>
<dbReference type="Pfam" id="PF01389">
    <property type="entry name" value="OmpA_membrane"/>
    <property type="match status" value="1"/>
</dbReference>
<dbReference type="SUPFAM" id="SSF56925">
    <property type="entry name" value="OMPA-like"/>
    <property type="match status" value="1"/>
</dbReference>
<sequence>MKKLLLIAATSATILSSSISFAVDMGNDWYLRIDAGAAMFNKEKDKATGVKLKSNTTVPVDLGIGYYISENFRADLTLGTIIGGKLKKSGAATNAPFTGTNISASHKPTITRLLINGYVDLTNFDMFDVFAGAGVGPALVKEKITYNGITGLSSNTKNRTNISYKLTLGTSAQIADGVKAELAYSWIDDGRTKSKNVIYQGTSVSTGGMRYQSHNLTAGIRFDI</sequence>
<evidence type="ECO:0000255" key="1"/>
<evidence type="ECO:0000305" key="2"/>
<reference key="1">
    <citation type="journal article" date="2005" name="PLoS Biol.">
        <title>The genome sequence of Rickettsia felis identifies the first putative conjugative plasmid in an obligate intracellular parasite.</title>
        <authorList>
            <person name="Ogata H."/>
            <person name="Renesto P."/>
            <person name="Audic S."/>
            <person name="Robert C."/>
            <person name="Blanc G."/>
            <person name="Fournier P.-E."/>
            <person name="Parinello H."/>
            <person name="Claverie J.-M."/>
            <person name="Raoult D."/>
        </authorList>
    </citation>
    <scope>NUCLEOTIDE SEQUENCE [LARGE SCALE GENOMIC DNA]</scope>
    <source>
        <strain>ATCC VR-1525 / URRWXCal2</strain>
    </source>
</reference>
<gene>
    <name type="ordered locus">RF_1314</name>
</gene>
<proteinExistence type="inferred from homology"/>
<organism>
    <name type="scientific">Rickettsia felis (strain ATCC VR-1525 / URRWXCal2)</name>
    <name type="common">Rickettsia azadi</name>
    <dbReference type="NCBI Taxonomy" id="315456"/>
    <lineage>
        <taxon>Bacteria</taxon>
        <taxon>Pseudomonadati</taxon>
        <taxon>Pseudomonadota</taxon>
        <taxon>Alphaproteobacteria</taxon>
        <taxon>Rickettsiales</taxon>
        <taxon>Rickettsiaceae</taxon>
        <taxon>Rickettsieae</taxon>
        <taxon>Rickettsia</taxon>
        <taxon>spotted fever group</taxon>
    </lineage>
</organism>
<name>Y1314_RICFE</name>
<protein>
    <recommendedName>
        <fullName>Putative adhesin RF_1314</fullName>
    </recommendedName>
</protein>